<proteinExistence type="inferred from homology"/>
<organism>
    <name type="scientific">Caulobacter sp. (strain K31)</name>
    <dbReference type="NCBI Taxonomy" id="366602"/>
    <lineage>
        <taxon>Bacteria</taxon>
        <taxon>Pseudomonadati</taxon>
        <taxon>Pseudomonadota</taxon>
        <taxon>Alphaproteobacteria</taxon>
        <taxon>Caulobacterales</taxon>
        <taxon>Caulobacteraceae</taxon>
        <taxon>Caulobacter</taxon>
    </lineage>
</organism>
<gene>
    <name evidence="1" type="primary">rplN</name>
    <name type="ordered locus">Caul_1624</name>
</gene>
<dbReference type="EMBL" id="CP000927">
    <property type="protein sequence ID" value="ABZ70753.1"/>
    <property type="molecule type" value="Genomic_DNA"/>
</dbReference>
<dbReference type="SMR" id="B0T2D2"/>
<dbReference type="STRING" id="366602.Caul_1624"/>
<dbReference type="KEGG" id="cak:Caul_1624"/>
<dbReference type="eggNOG" id="COG0093">
    <property type="taxonomic scope" value="Bacteria"/>
</dbReference>
<dbReference type="HOGENOM" id="CLU_095071_2_1_5"/>
<dbReference type="OrthoDB" id="9806379at2"/>
<dbReference type="GO" id="GO:0022625">
    <property type="term" value="C:cytosolic large ribosomal subunit"/>
    <property type="evidence" value="ECO:0007669"/>
    <property type="project" value="TreeGrafter"/>
</dbReference>
<dbReference type="GO" id="GO:0070180">
    <property type="term" value="F:large ribosomal subunit rRNA binding"/>
    <property type="evidence" value="ECO:0007669"/>
    <property type="project" value="TreeGrafter"/>
</dbReference>
<dbReference type="GO" id="GO:0003735">
    <property type="term" value="F:structural constituent of ribosome"/>
    <property type="evidence" value="ECO:0007669"/>
    <property type="project" value="InterPro"/>
</dbReference>
<dbReference type="GO" id="GO:0006412">
    <property type="term" value="P:translation"/>
    <property type="evidence" value="ECO:0007669"/>
    <property type="project" value="UniProtKB-UniRule"/>
</dbReference>
<dbReference type="CDD" id="cd00337">
    <property type="entry name" value="Ribosomal_uL14"/>
    <property type="match status" value="1"/>
</dbReference>
<dbReference type="FunFam" id="2.40.150.20:FF:000001">
    <property type="entry name" value="50S ribosomal protein L14"/>
    <property type="match status" value="1"/>
</dbReference>
<dbReference type="Gene3D" id="2.40.150.20">
    <property type="entry name" value="Ribosomal protein L14"/>
    <property type="match status" value="1"/>
</dbReference>
<dbReference type="HAMAP" id="MF_01367">
    <property type="entry name" value="Ribosomal_uL14"/>
    <property type="match status" value="1"/>
</dbReference>
<dbReference type="InterPro" id="IPR000218">
    <property type="entry name" value="Ribosomal_uL14"/>
</dbReference>
<dbReference type="InterPro" id="IPR005745">
    <property type="entry name" value="Ribosomal_uL14_bac-type"/>
</dbReference>
<dbReference type="InterPro" id="IPR019972">
    <property type="entry name" value="Ribosomal_uL14_CS"/>
</dbReference>
<dbReference type="InterPro" id="IPR036853">
    <property type="entry name" value="Ribosomal_uL14_sf"/>
</dbReference>
<dbReference type="NCBIfam" id="TIGR01067">
    <property type="entry name" value="rplN_bact"/>
    <property type="match status" value="1"/>
</dbReference>
<dbReference type="PANTHER" id="PTHR11761">
    <property type="entry name" value="50S/60S RIBOSOMAL PROTEIN L14/L23"/>
    <property type="match status" value="1"/>
</dbReference>
<dbReference type="PANTHER" id="PTHR11761:SF3">
    <property type="entry name" value="LARGE RIBOSOMAL SUBUNIT PROTEIN UL14M"/>
    <property type="match status" value="1"/>
</dbReference>
<dbReference type="Pfam" id="PF00238">
    <property type="entry name" value="Ribosomal_L14"/>
    <property type="match status" value="1"/>
</dbReference>
<dbReference type="SMART" id="SM01374">
    <property type="entry name" value="Ribosomal_L14"/>
    <property type="match status" value="1"/>
</dbReference>
<dbReference type="SUPFAM" id="SSF50193">
    <property type="entry name" value="Ribosomal protein L14"/>
    <property type="match status" value="1"/>
</dbReference>
<dbReference type="PROSITE" id="PS00049">
    <property type="entry name" value="RIBOSOMAL_L14"/>
    <property type="match status" value="1"/>
</dbReference>
<name>RL14_CAUSK</name>
<sequence length="122" mass="13345">MIQMQTNLEVADNSGARRVMCIKVLGGAGRRYASVGDVIVVSVKEAIPRGRVKKGDVLRAVVVRVNQGMKRKDGSLIRFDKNAAVIVNKQSEPVGTRIFGPVPRELRAKNHMKIISLAPEVL</sequence>
<reference key="1">
    <citation type="submission" date="2008-01" db="EMBL/GenBank/DDBJ databases">
        <title>Complete sequence of chromosome of Caulobacter sp. K31.</title>
        <authorList>
            <consortium name="US DOE Joint Genome Institute"/>
            <person name="Copeland A."/>
            <person name="Lucas S."/>
            <person name="Lapidus A."/>
            <person name="Barry K."/>
            <person name="Glavina del Rio T."/>
            <person name="Dalin E."/>
            <person name="Tice H."/>
            <person name="Pitluck S."/>
            <person name="Bruce D."/>
            <person name="Goodwin L."/>
            <person name="Thompson L.S."/>
            <person name="Brettin T."/>
            <person name="Detter J.C."/>
            <person name="Han C."/>
            <person name="Schmutz J."/>
            <person name="Larimer F."/>
            <person name="Land M."/>
            <person name="Hauser L."/>
            <person name="Kyrpides N."/>
            <person name="Kim E."/>
            <person name="Stephens C."/>
            <person name="Richardson P."/>
        </authorList>
    </citation>
    <scope>NUCLEOTIDE SEQUENCE [LARGE SCALE GENOMIC DNA]</scope>
    <source>
        <strain>K31</strain>
    </source>
</reference>
<feature type="chain" id="PRO_1000087118" description="Large ribosomal subunit protein uL14">
    <location>
        <begin position="1"/>
        <end position="122"/>
    </location>
</feature>
<evidence type="ECO:0000255" key="1">
    <source>
        <dbReference type="HAMAP-Rule" id="MF_01367"/>
    </source>
</evidence>
<evidence type="ECO:0000305" key="2"/>
<accession>B0T2D2</accession>
<comment type="function">
    <text evidence="1">Binds to 23S rRNA. Forms part of two intersubunit bridges in the 70S ribosome.</text>
</comment>
<comment type="subunit">
    <text evidence="1">Part of the 50S ribosomal subunit. Forms a cluster with proteins L3 and L19. In the 70S ribosome, L14 and L19 interact and together make contacts with the 16S rRNA in bridges B5 and B8.</text>
</comment>
<comment type="similarity">
    <text evidence="1">Belongs to the universal ribosomal protein uL14 family.</text>
</comment>
<keyword id="KW-0687">Ribonucleoprotein</keyword>
<keyword id="KW-0689">Ribosomal protein</keyword>
<keyword id="KW-0694">RNA-binding</keyword>
<keyword id="KW-0699">rRNA-binding</keyword>
<protein>
    <recommendedName>
        <fullName evidence="1">Large ribosomal subunit protein uL14</fullName>
    </recommendedName>
    <alternativeName>
        <fullName evidence="2">50S ribosomal protein L14</fullName>
    </alternativeName>
</protein>